<protein>
    <recommendedName>
        <fullName evidence="1">Putative pre-16S rRNA nuclease</fullName>
        <ecNumber evidence="1">3.1.-.-</ecNumber>
    </recommendedName>
</protein>
<sequence length="143" mass="15639">MPEPARPATASVPVEGTLLAFDYGEKRIGVALGNTVSRSARALETIPNRSVDFRFAQISRLVGEWQPVGFVVGMPVHPDGEEQPMIKLAKRFGNQLLGRYGLPVTWVDERYSSIAAQDAGASDDVLDAEAARIILQQFFDEHA</sequence>
<reference key="1">
    <citation type="submission" date="2008-05" db="EMBL/GenBank/DDBJ databases">
        <title>Complete sequence of chromosome 1 of Ralstonia pickettii 12J.</title>
        <authorList>
            <person name="Lucas S."/>
            <person name="Copeland A."/>
            <person name="Lapidus A."/>
            <person name="Glavina del Rio T."/>
            <person name="Dalin E."/>
            <person name="Tice H."/>
            <person name="Bruce D."/>
            <person name="Goodwin L."/>
            <person name="Pitluck S."/>
            <person name="Meincke L."/>
            <person name="Brettin T."/>
            <person name="Detter J.C."/>
            <person name="Han C."/>
            <person name="Kuske C.R."/>
            <person name="Schmutz J."/>
            <person name="Larimer F."/>
            <person name="Land M."/>
            <person name="Hauser L."/>
            <person name="Kyrpides N."/>
            <person name="Mikhailova N."/>
            <person name="Marsh T."/>
            <person name="Richardson P."/>
        </authorList>
    </citation>
    <scope>NUCLEOTIDE SEQUENCE [LARGE SCALE GENOMIC DNA]</scope>
    <source>
        <strain>12J</strain>
    </source>
</reference>
<feature type="chain" id="PRO_1000131060" description="Putative pre-16S rRNA nuclease">
    <location>
        <begin position="1"/>
        <end position="143"/>
    </location>
</feature>
<organism>
    <name type="scientific">Ralstonia pickettii (strain 12J)</name>
    <dbReference type="NCBI Taxonomy" id="402626"/>
    <lineage>
        <taxon>Bacteria</taxon>
        <taxon>Pseudomonadati</taxon>
        <taxon>Pseudomonadota</taxon>
        <taxon>Betaproteobacteria</taxon>
        <taxon>Burkholderiales</taxon>
        <taxon>Burkholderiaceae</taxon>
        <taxon>Ralstonia</taxon>
    </lineage>
</organism>
<proteinExistence type="inferred from homology"/>
<comment type="function">
    <text evidence="1">Could be a nuclease involved in processing of the 5'-end of pre-16S rRNA.</text>
</comment>
<comment type="subcellular location">
    <subcellularLocation>
        <location evidence="1">Cytoplasm</location>
    </subcellularLocation>
</comment>
<comment type="similarity">
    <text evidence="1">Belongs to the YqgF nuclease family.</text>
</comment>
<evidence type="ECO:0000255" key="1">
    <source>
        <dbReference type="HAMAP-Rule" id="MF_00651"/>
    </source>
</evidence>
<name>YQGF_RALPJ</name>
<gene>
    <name type="ordered locus">Rpic_0620</name>
</gene>
<keyword id="KW-0963">Cytoplasm</keyword>
<keyword id="KW-0378">Hydrolase</keyword>
<keyword id="KW-0540">Nuclease</keyword>
<keyword id="KW-0690">Ribosome biogenesis</keyword>
<dbReference type="EC" id="3.1.-.-" evidence="1"/>
<dbReference type="EMBL" id="CP001068">
    <property type="protein sequence ID" value="ACD25771.1"/>
    <property type="molecule type" value="Genomic_DNA"/>
</dbReference>
<dbReference type="SMR" id="B2U7A9"/>
<dbReference type="STRING" id="402626.Rpic_0620"/>
<dbReference type="KEGG" id="rpi:Rpic_0620"/>
<dbReference type="PATRIC" id="fig|402626.5.peg.1825"/>
<dbReference type="eggNOG" id="COG0816">
    <property type="taxonomic scope" value="Bacteria"/>
</dbReference>
<dbReference type="HOGENOM" id="CLU_098240_3_2_4"/>
<dbReference type="GO" id="GO:0005829">
    <property type="term" value="C:cytosol"/>
    <property type="evidence" value="ECO:0007669"/>
    <property type="project" value="TreeGrafter"/>
</dbReference>
<dbReference type="GO" id="GO:0004518">
    <property type="term" value="F:nuclease activity"/>
    <property type="evidence" value="ECO:0007669"/>
    <property type="project" value="UniProtKB-KW"/>
</dbReference>
<dbReference type="GO" id="GO:0000967">
    <property type="term" value="P:rRNA 5'-end processing"/>
    <property type="evidence" value="ECO:0007669"/>
    <property type="project" value="UniProtKB-UniRule"/>
</dbReference>
<dbReference type="CDD" id="cd16964">
    <property type="entry name" value="YqgF"/>
    <property type="match status" value="1"/>
</dbReference>
<dbReference type="Gene3D" id="3.30.420.140">
    <property type="entry name" value="YqgF/RNase H-like domain"/>
    <property type="match status" value="1"/>
</dbReference>
<dbReference type="HAMAP" id="MF_00651">
    <property type="entry name" value="Nuclease_YqgF"/>
    <property type="match status" value="1"/>
</dbReference>
<dbReference type="InterPro" id="IPR012337">
    <property type="entry name" value="RNaseH-like_sf"/>
</dbReference>
<dbReference type="InterPro" id="IPR005227">
    <property type="entry name" value="YqgF"/>
</dbReference>
<dbReference type="InterPro" id="IPR006641">
    <property type="entry name" value="YqgF/RNaseH-like_dom"/>
</dbReference>
<dbReference type="InterPro" id="IPR037027">
    <property type="entry name" value="YqgF/RNaseH-like_dom_sf"/>
</dbReference>
<dbReference type="NCBIfam" id="TIGR00250">
    <property type="entry name" value="RNAse_H_YqgF"/>
    <property type="match status" value="1"/>
</dbReference>
<dbReference type="PANTHER" id="PTHR33317">
    <property type="entry name" value="POLYNUCLEOTIDYL TRANSFERASE, RIBONUCLEASE H-LIKE SUPERFAMILY PROTEIN"/>
    <property type="match status" value="1"/>
</dbReference>
<dbReference type="PANTHER" id="PTHR33317:SF4">
    <property type="entry name" value="POLYNUCLEOTIDYL TRANSFERASE, RIBONUCLEASE H-LIKE SUPERFAMILY PROTEIN"/>
    <property type="match status" value="1"/>
</dbReference>
<dbReference type="Pfam" id="PF03652">
    <property type="entry name" value="RuvX"/>
    <property type="match status" value="1"/>
</dbReference>
<dbReference type="SMART" id="SM00732">
    <property type="entry name" value="YqgFc"/>
    <property type="match status" value="1"/>
</dbReference>
<dbReference type="SUPFAM" id="SSF53098">
    <property type="entry name" value="Ribonuclease H-like"/>
    <property type="match status" value="1"/>
</dbReference>
<accession>B2U7A9</accession>